<organism>
    <name type="scientific">Oryza sativa subsp. japonica</name>
    <name type="common">Rice</name>
    <dbReference type="NCBI Taxonomy" id="39947"/>
    <lineage>
        <taxon>Eukaryota</taxon>
        <taxon>Viridiplantae</taxon>
        <taxon>Streptophyta</taxon>
        <taxon>Embryophyta</taxon>
        <taxon>Tracheophyta</taxon>
        <taxon>Spermatophyta</taxon>
        <taxon>Magnoliopsida</taxon>
        <taxon>Liliopsida</taxon>
        <taxon>Poales</taxon>
        <taxon>Poaceae</taxon>
        <taxon>BOP clade</taxon>
        <taxon>Oryzoideae</taxon>
        <taxon>Oryzeae</taxon>
        <taxon>Oryzinae</taxon>
        <taxon>Oryza</taxon>
        <taxon>Oryza sativa</taxon>
    </lineage>
</organism>
<feature type="chain" id="PRO_0000440563" description="U-box domain-containing protein 70">
    <location>
        <begin position="1"/>
        <end position="805"/>
    </location>
</feature>
<feature type="repeat" description="TPR 1" evidence="1">
    <location>
        <begin position="15"/>
        <end position="48"/>
    </location>
</feature>
<feature type="repeat" description="TPR 2" evidence="1">
    <location>
        <begin position="49"/>
        <end position="82"/>
    </location>
</feature>
<feature type="repeat" description="TPR 3" evidence="1">
    <location>
        <begin position="90"/>
        <end position="127"/>
    </location>
</feature>
<feature type="repeat" description="TPR 4" evidence="1">
    <location>
        <begin position="129"/>
        <end position="153"/>
    </location>
</feature>
<feature type="repeat" description="TPR 5" evidence="1">
    <location>
        <begin position="154"/>
        <end position="187"/>
    </location>
</feature>
<feature type="repeat" description="TPR 6" evidence="1">
    <location>
        <begin position="189"/>
        <end position="221"/>
    </location>
</feature>
<feature type="repeat" description="TPR 7" evidence="1">
    <location>
        <begin position="222"/>
        <end position="255"/>
    </location>
</feature>
<feature type="domain" description="Protein kinase" evidence="2">
    <location>
        <begin position="445"/>
        <end position="711"/>
    </location>
</feature>
<feature type="domain" description="U-box" evidence="3">
    <location>
        <begin position="730"/>
        <end position="804"/>
    </location>
</feature>
<feature type="region of interest" description="Disordered" evidence="4">
    <location>
        <begin position="136"/>
        <end position="160"/>
    </location>
</feature>
<feature type="coiled-coil region" evidence="1">
    <location>
        <begin position="341"/>
        <end position="417"/>
    </location>
</feature>
<feature type="active site" description="Proton acceptor" evidence="2">
    <location>
        <position position="567"/>
    </location>
</feature>
<feature type="binding site" evidence="2">
    <location>
        <begin position="451"/>
        <end position="459"/>
    </location>
    <ligand>
        <name>ATP</name>
        <dbReference type="ChEBI" id="CHEBI:30616"/>
    </ligand>
</feature>
<feature type="binding site" evidence="2">
    <location>
        <position position="472"/>
    </location>
    <ligand>
        <name>ATP</name>
        <dbReference type="ChEBI" id="CHEBI:30616"/>
    </ligand>
</feature>
<dbReference type="EC" id="2.3.2.27" evidence="8"/>
<dbReference type="EC" id="2.7.11.-" evidence="8"/>
<dbReference type="EMBL" id="AB026295">
    <property type="protein sequence ID" value="BAD67644.1"/>
    <property type="molecule type" value="Genomic_DNA"/>
</dbReference>
<dbReference type="EMBL" id="AP008212">
    <property type="protein sequence ID" value="BAF18807.1"/>
    <property type="molecule type" value="Genomic_DNA"/>
</dbReference>
<dbReference type="EMBL" id="AP014962">
    <property type="protein sequence ID" value="BAS96304.1"/>
    <property type="molecule type" value="Genomic_DNA"/>
</dbReference>
<dbReference type="EMBL" id="CM000143">
    <property type="protein sequence ID" value="EEE65144.1"/>
    <property type="molecule type" value="Genomic_DNA"/>
</dbReference>
<dbReference type="EMBL" id="AK069245">
    <property type="protein sequence ID" value="BAG91337.1"/>
    <property type="molecule type" value="mRNA"/>
</dbReference>
<dbReference type="SMR" id="Q5WA76"/>
<dbReference type="FunCoup" id="Q5WA76">
    <property type="interactions" value="19"/>
</dbReference>
<dbReference type="STRING" id="39947.Q5WA76"/>
<dbReference type="PaxDb" id="39947-Q5WA76"/>
<dbReference type="EnsemblPlants" id="Os06t0163000-01">
    <property type="protein sequence ID" value="Os06t0163000-01"/>
    <property type="gene ID" value="Os06g0163000"/>
</dbReference>
<dbReference type="EnsemblPlants" id="Os06t0163000-03">
    <property type="protein sequence ID" value="Os06t0163000-03"/>
    <property type="gene ID" value="Os06g0163000"/>
</dbReference>
<dbReference type="Gramene" id="Os06t0163000-01">
    <property type="protein sequence ID" value="Os06t0163000-01"/>
    <property type="gene ID" value="Os06g0163000"/>
</dbReference>
<dbReference type="Gramene" id="Os06t0163000-03">
    <property type="protein sequence ID" value="Os06t0163000-03"/>
    <property type="gene ID" value="Os06g0163000"/>
</dbReference>
<dbReference type="KEGG" id="dosa:Os06g0163000"/>
<dbReference type="KEGG" id="osa:4340220"/>
<dbReference type="eggNOG" id="KOG0548">
    <property type="taxonomic scope" value="Eukaryota"/>
</dbReference>
<dbReference type="HOGENOM" id="CLU_020505_0_0_1"/>
<dbReference type="InParanoid" id="Q5WA76"/>
<dbReference type="OMA" id="MHYTEAM"/>
<dbReference type="OrthoDB" id="4062651at2759"/>
<dbReference type="UniPathway" id="UPA00143"/>
<dbReference type="Proteomes" id="UP000000763">
    <property type="component" value="Chromosome 6"/>
</dbReference>
<dbReference type="Proteomes" id="UP000007752">
    <property type="component" value="Chromosome 6"/>
</dbReference>
<dbReference type="Proteomes" id="UP000059680">
    <property type="component" value="Chromosome 6"/>
</dbReference>
<dbReference type="ExpressionAtlas" id="Q5WA76">
    <property type="expression patterns" value="baseline and differential"/>
</dbReference>
<dbReference type="GO" id="GO:0005524">
    <property type="term" value="F:ATP binding"/>
    <property type="evidence" value="ECO:0007669"/>
    <property type="project" value="UniProtKB-KW"/>
</dbReference>
<dbReference type="GO" id="GO:0106310">
    <property type="term" value="F:protein serine kinase activity"/>
    <property type="evidence" value="ECO:0007669"/>
    <property type="project" value="RHEA"/>
</dbReference>
<dbReference type="GO" id="GO:0004674">
    <property type="term" value="F:protein serine/threonine kinase activity"/>
    <property type="evidence" value="ECO:0007669"/>
    <property type="project" value="UniProtKB-KW"/>
</dbReference>
<dbReference type="GO" id="GO:0004842">
    <property type="term" value="F:ubiquitin-protein transferase activity"/>
    <property type="evidence" value="ECO:0007669"/>
    <property type="project" value="InterPro"/>
</dbReference>
<dbReference type="GO" id="GO:0016567">
    <property type="term" value="P:protein ubiquitination"/>
    <property type="evidence" value="ECO:0007669"/>
    <property type="project" value="UniProtKB-UniPathway"/>
</dbReference>
<dbReference type="CDD" id="cd16655">
    <property type="entry name" value="RING-Ubox_WDSUB1-like"/>
    <property type="match status" value="1"/>
</dbReference>
<dbReference type="FunFam" id="3.30.200.20:FF:000162">
    <property type="entry name" value="Adenine nucleotide alpha hydrolase-like domain kinase"/>
    <property type="match status" value="1"/>
</dbReference>
<dbReference type="FunFam" id="1.25.40.10:FF:000010">
    <property type="entry name" value="Stress-induced phosphoprotein 1"/>
    <property type="match status" value="1"/>
</dbReference>
<dbReference type="Gene3D" id="3.30.200.20">
    <property type="entry name" value="Phosphorylase Kinase, domain 1"/>
    <property type="match status" value="1"/>
</dbReference>
<dbReference type="Gene3D" id="1.25.40.10">
    <property type="entry name" value="Tetratricopeptide repeat domain"/>
    <property type="match status" value="2"/>
</dbReference>
<dbReference type="Gene3D" id="1.10.510.10">
    <property type="entry name" value="Transferase(Phosphotransferase) domain 1"/>
    <property type="match status" value="1"/>
</dbReference>
<dbReference type="Gene3D" id="3.30.40.10">
    <property type="entry name" value="Zinc/RING finger domain, C3HC4 (zinc finger)"/>
    <property type="match status" value="1"/>
</dbReference>
<dbReference type="InterPro" id="IPR011009">
    <property type="entry name" value="Kinase-like_dom_sf"/>
</dbReference>
<dbReference type="InterPro" id="IPR000719">
    <property type="entry name" value="Prot_kinase_dom"/>
</dbReference>
<dbReference type="InterPro" id="IPR017441">
    <property type="entry name" value="Protein_kinase_ATP_BS"/>
</dbReference>
<dbReference type="InterPro" id="IPR008271">
    <property type="entry name" value="Ser/Thr_kinase_AS"/>
</dbReference>
<dbReference type="InterPro" id="IPR011990">
    <property type="entry name" value="TPR-like_helical_dom_sf"/>
</dbReference>
<dbReference type="InterPro" id="IPR019734">
    <property type="entry name" value="TPR_rpt"/>
</dbReference>
<dbReference type="InterPro" id="IPR051348">
    <property type="entry name" value="U-box_ubiquitin_ligases"/>
</dbReference>
<dbReference type="InterPro" id="IPR003613">
    <property type="entry name" value="Ubox_domain"/>
</dbReference>
<dbReference type="InterPro" id="IPR013083">
    <property type="entry name" value="Znf_RING/FYVE/PHD"/>
</dbReference>
<dbReference type="PANTHER" id="PTHR45647">
    <property type="entry name" value="OS02G0152300 PROTEIN"/>
    <property type="match status" value="1"/>
</dbReference>
<dbReference type="PANTHER" id="PTHR45647:SF7">
    <property type="entry name" value="U-BOX DOMAIN-CONTAINING PROTEIN 70"/>
    <property type="match status" value="1"/>
</dbReference>
<dbReference type="Pfam" id="PF00069">
    <property type="entry name" value="Pkinase"/>
    <property type="match status" value="1"/>
</dbReference>
<dbReference type="Pfam" id="PF04564">
    <property type="entry name" value="U-box"/>
    <property type="match status" value="1"/>
</dbReference>
<dbReference type="SMART" id="SM00220">
    <property type="entry name" value="S_TKc"/>
    <property type="match status" value="1"/>
</dbReference>
<dbReference type="SMART" id="SM00028">
    <property type="entry name" value="TPR"/>
    <property type="match status" value="4"/>
</dbReference>
<dbReference type="SMART" id="SM00504">
    <property type="entry name" value="Ubox"/>
    <property type="match status" value="1"/>
</dbReference>
<dbReference type="SUPFAM" id="SSF56112">
    <property type="entry name" value="Protein kinase-like (PK-like)"/>
    <property type="match status" value="1"/>
</dbReference>
<dbReference type="SUPFAM" id="SSF57850">
    <property type="entry name" value="RING/U-box"/>
    <property type="match status" value="1"/>
</dbReference>
<dbReference type="SUPFAM" id="SSF48452">
    <property type="entry name" value="TPR-like"/>
    <property type="match status" value="2"/>
</dbReference>
<dbReference type="PROSITE" id="PS00107">
    <property type="entry name" value="PROTEIN_KINASE_ATP"/>
    <property type="match status" value="1"/>
</dbReference>
<dbReference type="PROSITE" id="PS50011">
    <property type="entry name" value="PROTEIN_KINASE_DOM"/>
    <property type="match status" value="1"/>
</dbReference>
<dbReference type="PROSITE" id="PS00108">
    <property type="entry name" value="PROTEIN_KINASE_ST"/>
    <property type="match status" value="1"/>
</dbReference>
<dbReference type="PROSITE" id="PS50005">
    <property type="entry name" value="TPR"/>
    <property type="match status" value="4"/>
</dbReference>
<dbReference type="PROSITE" id="PS50293">
    <property type="entry name" value="TPR_REGION"/>
    <property type="match status" value="2"/>
</dbReference>
<dbReference type="PROSITE" id="PS51698">
    <property type="entry name" value="U_BOX"/>
    <property type="match status" value="1"/>
</dbReference>
<name>PUB70_ORYSJ</name>
<proteinExistence type="evidence at protein level"/>
<sequence>MEAEDDERAEAEAEARREKEAGNAAYRKLYLETAVRHYTRGALLDPRDISFLTNRAAAYLLMSKYKECVRDCDEAVEKGRELRADNKLVARALARKASALLKLAACAADYDPAIRALQQSLAEHYSEETLAKLGEAEEARKEIEERERLDQEAADHHRDRGNDFFKQKRYQEAAMHYTEAMKKNPKDPRVFSNRAQCHIYLGALPEGLEDADKCIALDPTFLKGYLRKAKVQLLMGNYEIALATYVEGLKCDPNNLEVLDGLRRCAACIKRANGGDSRAEDLREILGDLHLNDDLCNKLQKSMDEAAVLKKEASDERLKRIESERLARTLEDLYLSQVQQRKETEESLSRVQQEFEQLKIQQDEVTVELQRVNEQNENLLGQLSDSREHFEWLLSEHDQLLRERDNAVREVEELRQKRGQMLSVLVTAMHCEFSSSEVESATENFSNSLKIGEGGFGCVYKGILRNMTVAIKVLRPDSLQGQSQFEQEVSILSRVRHPHLVTLLGACSESSTLVYEFLPNGSLEDFLMCSDKRQTLTWQARIRIIAEICSALIFLHKNKPHPVVHGDLKPANILLGVNLVSKLSDFGISRLLIQSSTNNTTLYRTMHPVGTPLYMDPEFLSTGELTPQSDVYSFGIVVLRLLTGKPPVGIKNIVEDAMEKGDLNSVIDTSVGEWPHLHIEQLAYLALRCTELSRRCRPDLSGEVWAIVEAIRDAALSSPSSSRSAQDQNSPPSYFICPISQDIMDDPHIAADGFTYEAEAIRSWLCNGHDTSPMTNLLLEHEELIPNRALRSAIQEWLQQHSMSL</sequence>
<evidence type="ECO:0000255" key="1"/>
<evidence type="ECO:0000255" key="2">
    <source>
        <dbReference type="PROSITE-ProRule" id="PRU00159"/>
    </source>
</evidence>
<evidence type="ECO:0000255" key="3">
    <source>
        <dbReference type="PROSITE-ProRule" id="PRU01034"/>
    </source>
</evidence>
<evidence type="ECO:0000256" key="4">
    <source>
        <dbReference type="SAM" id="MobiDB-lite"/>
    </source>
</evidence>
<evidence type="ECO:0000269" key="5">
    <source>
    </source>
</evidence>
<evidence type="ECO:0000303" key="6">
    <source>
    </source>
</evidence>
<evidence type="ECO:0000303" key="7">
    <source>
    </source>
</evidence>
<evidence type="ECO:0000305" key="8"/>
<evidence type="ECO:0000312" key="9">
    <source>
        <dbReference type="EMBL" id="BAD67644.1"/>
    </source>
</evidence>
<evidence type="ECO:0000312" key="10">
    <source>
        <dbReference type="EMBL" id="BAF18807.1"/>
    </source>
</evidence>
<evidence type="ECO:0000312" key="11">
    <source>
        <dbReference type="EMBL" id="EEE65144.1"/>
    </source>
</evidence>
<protein>
    <recommendedName>
        <fullName evidence="7">U-box domain-containing protein 70</fullName>
        <shortName evidence="7">OsPUB70</shortName>
    </recommendedName>
    <alternativeName>
        <fullName evidence="8">Plant U-box protein 70</fullName>
    </alternativeName>
    <alternativeName>
        <fullName evidence="6">Receptor-like cytoplasmic kinase 197</fullName>
        <shortName evidence="6">OsRLCK197</shortName>
    </alternativeName>
    <domain>
        <recommendedName>
            <fullName evidence="8">E3 ubiquitin ligase</fullName>
            <ecNumber evidence="8">2.3.2.27</ecNumber>
        </recommendedName>
        <alternativeName>
            <fullName evidence="8">RING-type E3 ubiquitin transferase</fullName>
        </alternativeName>
    </domain>
    <domain>
        <recommendedName>
            <fullName evidence="8">Serine/threonine-protein kinase</fullName>
            <ecNumber evidence="8">2.7.11.-</ecNumber>
        </recommendedName>
    </domain>
</protein>
<comment type="function">
    <text evidence="5">Functions as an E3 ubiquitin ligase. Is recruited by MODD to promote ubiquitination of BZIP46, a positive regulator of abscisic acid (ABA) signaling and drought stress tolerance.</text>
</comment>
<comment type="catalytic activity">
    <reaction>
        <text>L-seryl-[protein] + ATP = O-phospho-L-seryl-[protein] + ADP + H(+)</text>
        <dbReference type="Rhea" id="RHEA:17989"/>
        <dbReference type="Rhea" id="RHEA-COMP:9863"/>
        <dbReference type="Rhea" id="RHEA-COMP:11604"/>
        <dbReference type="ChEBI" id="CHEBI:15378"/>
        <dbReference type="ChEBI" id="CHEBI:29999"/>
        <dbReference type="ChEBI" id="CHEBI:30616"/>
        <dbReference type="ChEBI" id="CHEBI:83421"/>
        <dbReference type="ChEBI" id="CHEBI:456216"/>
    </reaction>
</comment>
<comment type="catalytic activity">
    <reaction>
        <text>L-threonyl-[protein] + ATP = O-phospho-L-threonyl-[protein] + ADP + H(+)</text>
        <dbReference type="Rhea" id="RHEA:46608"/>
        <dbReference type="Rhea" id="RHEA-COMP:11060"/>
        <dbReference type="Rhea" id="RHEA-COMP:11605"/>
        <dbReference type="ChEBI" id="CHEBI:15378"/>
        <dbReference type="ChEBI" id="CHEBI:30013"/>
        <dbReference type="ChEBI" id="CHEBI:30616"/>
        <dbReference type="ChEBI" id="CHEBI:61977"/>
        <dbReference type="ChEBI" id="CHEBI:456216"/>
    </reaction>
</comment>
<comment type="catalytic activity">
    <reaction>
        <text>S-ubiquitinyl-[E2 ubiquitin-conjugating enzyme]-L-cysteine + [acceptor protein]-L-lysine = [E2 ubiquitin-conjugating enzyme]-L-cysteine + N(6)-ubiquitinyl-[acceptor protein]-L-lysine.</text>
        <dbReference type="EC" id="2.3.2.27"/>
    </reaction>
</comment>
<comment type="pathway">
    <text>Protein modification; protein ubiquitination.</text>
</comment>
<comment type="subunit">
    <text evidence="5">Interacts with MODD.</text>
</comment>
<comment type="similarity">
    <text evidence="8">Belongs to the protein kinase superfamily. Ser/Thr protein kinase family.</text>
</comment>
<accession>Q5WA76</accession>
<keyword id="KW-0067">ATP-binding</keyword>
<keyword id="KW-0175">Coiled coil</keyword>
<keyword id="KW-0418">Kinase</keyword>
<keyword id="KW-0547">Nucleotide-binding</keyword>
<keyword id="KW-1185">Reference proteome</keyword>
<keyword id="KW-0677">Repeat</keyword>
<keyword id="KW-0723">Serine/threonine-protein kinase</keyword>
<keyword id="KW-0802">TPR repeat</keyword>
<keyword id="KW-0808">Transferase</keyword>
<keyword id="KW-0833">Ubl conjugation pathway</keyword>
<gene>
    <name evidence="7" type="primary">PUB70</name>
    <name evidence="6" type="synonym">RLCK197</name>
    <name evidence="10" type="ordered locus">Os06g0163000</name>
    <name evidence="8" type="ordered locus">LOC_Os06g06760</name>
    <name evidence="11" type="ORF">OsJ_20227</name>
    <name evidence="9" type="ORF">P0681F10.40</name>
</gene>
<reference key="1">
    <citation type="journal article" date="2005" name="Nature">
        <title>The map-based sequence of the rice genome.</title>
        <authorList>
            <consortium name="International rice genome sequencing project (IRGSP)"/>
        </authorList>
    </citation>
    <scope>NUCLEOTIDE SEQUENCE [LARGE SCALE GENOMIC DNA]</scope>
    <source>
        <strain>cv. Nipponbare</strain>
    </source>
</reference>
<reference key="2">
    <citation type="journal article" date="2008" name="Nucleic Acids Res.">
        <title>The rice annotation project database (RAP-DB): 2008 update.</title>
        <authorList>
            <consortium name="The rice annotation project (RAP)"/>
        </authorList>
    </citation>
    <scope>GENOME REANNOTATION</scope>
    <source>
        <strain>cv. Nipponbare</strain>
    </source>
</reference>
<reference key="3">
    <citation type="journal article" date="2013" name="Rice">
        <title>Improvement of the Oryza sativa Nipponbare reference genome using next generation sequence and optical map data.</title>
        <authorList>
            <person name="Kawahara Y."/>
            <person name="de la Bastide M."/>
            <person name="Hamilton J.P."/>
            <person name="Kanamori H."/>
            <person name="McCombie W.R."/>
            <person name="Ouyang S."/>
            <person name="Schwartz D.C."/>
            <person name="Tanaka T."/>
            <person name="Wu J."/>
            <person name="Zhou S."/>
            <person name="Childs K.L."/>
            <person name="Davidson R.M."/>
            <person name="Lin H."/>
            <person name="Quesada-Ocampo L."/>
            <person name="Vaillancourt B."/>
            <person name="Sakai H."/>
            <person name="Lee S.S."/>
            <person name="Kim J."/>
            <person name="Numa H."/>
            <person name="Itoh T."/>
            <person name="Buell C.R."/>
            <person name="Matsumoto T."/>
        </authorList>
    </citation>
    <scope>GENOME REANNOTATION</scope>
    <source>
        <strain>cv. Nipponbare</strain>
    </source>
</reference>
<reference key="4">
    <citation type="journal article" date="2005" name="PLoS Biol.">
        <title>The genomes of Oryza sativa: a history of duplications.</title>
        <authorList>
            <person name="Yu J."/>
            <person name="Wang J."/>
            <person name="Lin W."/>
            <person name="Li S."/>
            <person name="Li H."/>
            <person name="Zhou J."/>
            <person name="Ni P."/>
            <person name="Dong W."/>
            <person name="Hu S."/>
            <person name="Zeng C."/>
            <person name="Zhang J."/>
            <person name="Zhang Y."/>
            <person name="Li R."/>
            <person name="Xu Z."/>
            <person name="Li S."/>
            <person name="Li X."/>
            <person name="Zheng H."/>
            <person name="Cong L."/>
            <person name="Lin L."/>
            <person name="Yin J."/>
            <person name="Geng J."/>
            <person name="Li G."/>
            <person name="Shi J."/>
            <person name="Liu J."/>
            <person name="Lv H."/>
            <person name="Li J."/>
            <person name="Wang J."/>
            <person name="Deng Y."/>
            <person name="Ran L."/>
            <person name="Shi X."/>
            <person name="Wang X."/>
            <person name="Wu Q."/>
            <person name="Li C."/>
            <person name="Ren X."/>
            <person name="Wang J."/>
            <person name="Wang X."/>
            <person name="Li D."/>
            <person name="Liu D."/>
            <person name="Zhang X."/>
            <person name="Ji Z."/>
            <person name="Zhao W."/>
            <person name="Sun Y."/>
            <person name="Zhang Z."/>
            <person name="Bao J."/>
            <person name="Han Y."/>
            <person name="Dong L."/>
            <person name="Ji J."/>
            <person name="Chen P."/>
            <person name="Wu S."/>
            <person name="Liu J."/>
            <person name="Xiao Y."/>
            <person name="Bu D."/>
            <person name="Tan J."/>
            <person name="Yang L."/>
            <person name="Ye C."/>
            <person name="Zhang J."/>
            <person name="Xu J."/>
            <person name="Zhou Y."/>
            <person name="Yu Y."/>
            <person name="Zhang B."/>
            <person name="Zhuang S."/>
            <person name="Wei H."/>
            <person name="Liu B."/>
            <person name="Lei M."/>
            <person name="Yu H."/>
            <person name="Li Y."/>
            <person name="Xu H."/>
            <person name="Wei S."/>
            <person name="He X."/>
            <person name="Fang L."/>
            <person name="Zhang Z."/>
            <person name="Zhang Y."/>
            <person name="Huang X."/>
            <person name="Su Z."/>
            <person name="Tong W."/>
            <person name="Li J."/>
            <person name="Tong Z."/>
            <person name="Li S."/>
            <person name="Ye J."/>
            <person name="Wang L."/>
            <person name="Fang L."/>
            <person name="Lei T."/>
            <person name="Chen C.-S."/>
            <person name="Chen H.-C."/>
            <person name="Xu Z."/>
            <person name="Li H."/>
            <person name="Huang H."/>
            <person name="Zhang F."/>
            <person name="Xu H."/>
            <person name="Li N."/>
            <person name="Zhao C."/>
            <person name="Li S."/>
            <person name="Dong L."/>
            <person name="Huang Y."/>
            <person name="Li L."/>
            <person name="Xi Y."/>
            <person name="Qi Q."/>
            <person name="Li W."/>
            <person name="Zhang B."/>
            <person name="Hu W."/>
            <person name="Zhang Y."/>
            <person name="Tian X."/>
            <person name="Jiao Y."/>
            <person name="Liang X."/>
            <person name="Jin J."/>
            <person name="Gao L."/>
            <person name="Zheng W."/>
            <person name="Hao B."/>
            <person name="Liu S.-M."/>
            <person name="Wang W."/>
            <person name="Yuan L."/>
            <person name="Cao M."/>
            <person name="McDermott J."/>
            <person name="Samudrala R."/>
            <person name="Wang J."/>
            <person name="Wong G.K.-S."/>
            <person name="Yang H."/>
        </authorList>
    </citation>
    <scope>NUCLEOTIDE SEQUENCE [LARGE SCALE GENOMIC DNA]</scope>
    <source>
        <strain>cv. Nipponbare</strain>
    </source>
</reference>
<reference key="5">
    <citation type="journal article" date="2003" name="Science">
        <title>Collection, mapping, and annotation of over 28,000 cDNA clones from japonica rice.</title>
        <authorList>
            <consortium name="The rice full-length cDNA consortium"/>
        </authorList>
    </citation>
    <scope>NUCLEOTIDE SEQUENCE [LARGE SCALE MRNA]</scope>
    <source>
        <strain>cv. Nipponbare</strain>
    </source>
</reference>
<reference key="6">
    <citation type="journal article" date="2008" name="Mol. Plant">
        <title>The receptor-like cytoplasmic kinase (OsRLCK) gene family in rice: organization, phylogenetic relationship, and expression during development and stress.</title>
        <authorList>
            <person name="Vij S."/>
            <person name="Giri J."/>
            <person name="Dansana P.K."/>
            <person name="Kapoor S."/>
            <person name="Tyagi A.K."/>
        </authorList>
    </citation>
    <scope>GENE FAMILY</scope>
    <scope>NOMENCLATURE</scope>
</reference>
<reference key="7">
    <citation type="journal article" date="2008" name="Mol. Plant">
        <title>Classification, expression pattern, and E3 ligase activity assay of rice U-box-containing proteins.</title>
        <authorList>
            <person name="Zeng L.R."/>
            <person name="Park C.H."/>
            <person name="Venu R.C."/>
            <person name="Gough J."/>
            <person name="Wang G.L."/>
        </authorList>
    </citation>
    <scope>GENE FAMILY</scope>
    <scope>NOMENCLATURE</scope>
</reference>
<reference key="8">
    <citation type="journal article" date="2016" name="Plant Cell">
        <title>MODD mediates deactivation and degradation of OsbZIP46 to negatively regulate ABA signaling and drought resistance in rice.</title>
        <authorList>
            <person name="Tang N."/>
            <person name="Ma S."/>
            <person name="Zong W."/>
            <person name="Yang N."/>
            <person name="Lv Y."/>
            <person name="Yan C."/>
            <person name="Guo Z."/>
            <person name="Li J."/>
            <person name="Li X."/>
            <person name="Xiang Y."/>
            <person name="Song H."/>
            <person name="Xiao J."/>
            <person name="Li X."/>
            <person name="Xiong L."/>
        </authorList>
    </citation>
    <scope>FUNCTION</scope>
    <scope>INTERACTION WITH MODD</scope>
</reference>